<evidence type="ECO:0000250" key="1"/>
<evidence type="ECO:0000250" key="2">
    <source>
        <dbReference type="UniProtKB" id="P12798"/>
    </source>
</evidence>
<evidence type="ECO:0000255" key="3"/>
<evidence type="ECO:0000256" key="4">
    <source>
        <dbReference type="SAM" id="MobiDB-lite"/>
    </source>
</evidence>
<evidence type="ECO:0000303" key="5">
    <source>
    </source>
</evidence>
<evidence type="ECO:0000305" key="6"/>
<organism>
    <name type="scientific">Drosophila melanogaster</name>
    <name type="common">Fruit fly</name>
    <dbReference type="NCBI Taxonomy" id="7227"/>
    <lineage>
        <taxon>Eukaryota</taxon>
        <taxon>Metazoa</taxon>
        <taxon>Ecdysozoa</taxon>
        <taxon>Arthropoda</taxon>
        <taxon>Hexapoda</taxon>
        <taxon>Insecta</taxon>
        <taxon>Pterygota</taxon>
        <taxon>Neoptera</taxon>
        <taxon>Endopterygota</taxon>
        <taxon>Diptera</taxon>
        <taxon>Brachycera</taxon>
        <taxon>Muscomorpha</taxon>
        <taxon>Ephydroidea</taxon>
        <taxon>Drosophilidae</taxon>
        <taxon>Drosophila</taxon>
        <taxon>Sophophora</taxon>
    </lineage>
</organism>
<name>KPBB_DROME</name>
<protein>
    <recommendedName>
        <fullName>Probable phosphorylase b kinase regulatory subunit beta</fullName>
        <shortName>Phosphorylase kinase subunit beta</shortName>
    </recommendedName>
</protein>
<keyword id="KW-0025">Alternative splicing</keyword>
<keyword id="KW-0112">Calmodulin-binding</keyword>
<keyword id="KW-0119">Carbohydrate metabolism</keyword>
<keyword id="KW-1003">Cell membrane</keyword>
<keyword id="KW-0321">Glycogen metabolism</keyword>
<keyword id="KW-0449">Lipoprotein</keyword>
<keyword id="KW-0472">Membrane</keyword>
<keyword id="KW-0636">Prenylation</keyword>
<keyword id="KW-1185">Reference proteome</keyword>
<accession>Q9VLS1</accession>
<accession>F9VMG4</accession>
<accession>Q8IPG3</accession>
<accession>Q8SXP4</accession>
<comment type="function">
    <text evidence="1">Phosphorylase b kinase catalyzes the phosphorylation of serine in certain substrates, including troponin I. The beta chain acts as a regulatory unit and modulates the activity of the holoenzyme in response to phosphorylation (By similarity).</text>
</comment>
<comment type="pathway">
    <text>Glycan biosynthesis; glycogen metabolism.</text>
</comment>
<comment type="subcellular location">
    <subcellularLocation>
        <location evidence="6">Cell membrane</location>
        <topology evidence="6">Lipid-anchor</topology>
        <orientation evidence="6">Cytoplasmic side</orientation>
    </subcellularLocation>
</comment>
<comment type="alternative products">
    <event type="alternative splicing"/>
    <isoform>
        <id>Q9VLS1-1</id>
        <name>A</name>
        <sequence type="displayed"/>
    </isoform>
    <isoform>
        <id>Q9VLS1-2</id>
        <name>B</name>
        <sequence type="described" ref="VSP_007911 VSP_007912"/>
    </isoform>
</comment>
<comment type="PTM">
    <text evidence="2">Although the final Cys may be farnesylated, the terminal tripeptide is probably not removed, and the C-terminus is not methylated.</text>
</comment>
<comment type="similarity">
    <text evidence="6">Belongs to the phosphorylase b kinase regulatory chain family.</text>
</comment>
<proteinExistence type="evidence at transcript level"/>
<reference key="1">
    <citation type="journal article" date="2000" name="Science">
        <title>The genome sequence of Drosophila melanogaster.</title>
        <authorList>
            <person name="Adams M.D."/>
            <person name="Celniker S.E."/>
            <person name="Holt R.A."/>
            <person name="Evans C.A."/>
            <person name="Gocayne J.D."/>
            <person name="Amanatides P.G."/>
            <person name="Scherer S.E."/>
            <person name="Li P.W."/>
            <person name="Hoskins R.A."/>
            <person name="Galle R.F."/>
            <person name="George R.A."/>
            <person name="Lewis S.E."/>
            <person name="Richards S."/>
            <person name="Ashburner M."/>
            <person name="Henderson S.N."/>
            <person name="Sutton G.G."/>
            <person name="Wortman J.R."/>
            <person name="Yandell M.D."/>
            <person name="Zhang Q."/>
            <person name="Chen L.X."/>
            <person name="Brandon R.C."/>
            <person name="Rogers Y.-H.C."/>
            <person name="Blazej R.G."/>
            <person name="Champe M."/>
            <person name="Pfeiffer B.D."/>
            <person name="Wan K.H."/>
            <person name="Doyle C."/>
            <person name="Baxter E.G."/>
            <person name="Helt G."/>
            <person name="Nelson C.R."/>
            <person name="Miklos G.L.G."/>
            <person name="Abril J.F."/>
            <person name="Agbayani A."/>
            <person name="An H.-J."/>
            <person name="Andrews-Pfannkoch C."/>
            <person name="Baldwin D."/>
            <person name="Ballew R.M."/>
            <person name="Basu A."/>
            <person name="Baxendale J."/>
            <person name="Bayraktaroglu L."/>
            <person name="Beasley E.M."/>
            <person name="Beeson K.Y."/>
            <person name="Benos P.V."/>
            <person name="Berman B.P."/>
            <person name="Bhandari D."/>
            <person name="Bolshakov S."/>
            <person name="Borkova D."/>
            <person name="Botchan M.R."/>
            <person name="Bouck J."/>
            <person name="Brokstein P."/>
            <person name="Brottier P."/>
            <person name="Burtis K.C."/>
            <person name="Busam D.A."/>
            <person name="Butler H."/>
            <person name="Cadieu E."/>
            <person name="Center A."/>
            <person name="Chandra I."/>
            <person name="Cherry J.M."/>
            <person name="Cawley S."/>
            <person name="Dahlke C."/>
            <person name="Davenport L.B."/>
            <person name="Davies P."/>
            <person name="de Pablos B."/>
            <person name="Delcher A."/>
            <person name="Deng Z."/>
            <person name="Mays A.D."/>
            <person name="Dew I."/>
            <person name="Dietz S.M."/>
            <person name="Dodson K."/>
            <person name="Doup L.E."/>
            <person name="Downes M."/>
            <person name="Dugan-Rocha S."/>
            <person name="Dunkov B.C."/>
            <person name="Dunn P."/>
            <person name="Durbin K.J."/>
            <person name="Evangelista C.C."/>
            <person name="Ferraz C."/>
            <person name="Ferriera S."/>
            <person name="Fleischmann W."/>
            <person name="Fosler C."/>
            <person name="Gabrielian A.E."/>
            <person name="Garg N.S."/>
            <person name="Gelbart W.M."/>
            <person name="Glasser K."/>
            <person name="Glodek A."/>
            <person name="Gong F."/>
            <person name="Gorrell J.H."/>
            <person name="Gu Z."/>
            <person name="Guan P."/>
            <person name="Harris M."/>
            <person name="Harris N.L."/>
            <person name="Harvey D.A."/>
            <person name="Heiman T.J."/>
            <person name="Hernandez J.R."/>
            <person name="Houck J."/>
            <person name="Hostin D."/>
            <person name="Houston K.A."/>
            <person name="Howland T.J."/>
            <person name="Wei M.-H."/>
            <person name="Ibegwam C."/>
            <person name="Jalali M."/>
            <person name="Kalush F."/>
            <person name="Karpen G.H."/>
            <person name="Ke Z."/>
            <person name="Kennison J.A."/>
            <person name="Ketchum K.A."/>
            <person name="Kimmel B.E."/>
            <person name="Kodira C.D."/>
            <person name="Kraft C.L."/>
            <person name="Kravitz S."/>
            <person name="Kulp D."/>
            <person name="Lai Z."/>
            <person name="Lasko P."/>
            <person name="Lei Y."/>
            <person name="Levitsky A.A."/>
            <person name="Li J.H."/>
            <person name="Li Z."/>
            <person name="Liang Y."/>
            <person name="Lin X."/>
            <person name="Liu X."/>
            <person name="Mattei B."/>
            <person name="McIntosh T.C."/>
            <person name="McLeod M.P."/>
            <person name="McPherson D."/>
            <person name="Merkulov G."/>
            <person name="Milshina N.V."/>
            <person name="Mobarry C."/>
            <person name="Morris J."/>
            <person name="Moshrefi A."/>
            <person name="Mount S.M."/>
            <person name="Moy M."/>
            <person name="Murphy B."/>
            <person name="Murphy L."/>
            <person name="Muzny D.M."/>
            <person name="Nelson D.L."/>
            <person name="Nelson D.R."/>
            <person name="Nelson K.A."/>
            <person name="Nixon K."/>
            <person name="Nusskern D.R."/>
            <person name="Pacleb J.M."/>
            <person name="Palazzolo M."/>
            <person name="Pittman G.S."/>
            <person name="Pan S."/>
            <person name="Pollard J."/>
            <person name="Puri V."/>
            <person name="Reese M.G."/>
            <person name="Reinert K."/>
            <person name="Remington K."/>
            <person name="Saunders R.D.C."/>
            <person name="Scheeler F."/>
            <person name="Shen H."/>
            <person name="Shue B.C."/>
            <person name="Siden-Kiamos I."/>
            <person name="Simpson M."/>
            <person name="Skupski M.P."/>
            <person name="Smith T.J."/>
            <person name="Spier E."/>
            <person name="Spradling A.C."/>
            <person name="Stapleton M."/>
            <person name="Strong R."/>
            <person name="Sun E."/>
            <person name="Svirskas R."/>
            <person name="Tector C."/>
            <person name="Turner R."/>
            <person name="Venter E."/>
            <person name="Wang A.H."/>
            <person name="Wang X."/>
            <person name="Wang Z.-Y."/>
            <person name="Wassarman D.A."/>
            <person name="Weinstock G.M."/>
            <person name="Weissenbach J."/>
            <person name="Williams S.M."/>
            <person name="Woodage T."/>
            <person name="Worley K.C."/>
            <person name="Wu D."/>
            <person name="Yang S."/>
            <person name="Yao Q.A."/>
            <person name="Ye J."/>
            <person name="Yeh R.-F."/>
            <person name="Zaveri J.S."/>
            <person name="Zhan M."/>
            <person name="Zhang G."/>
            <person name="Zhao Q."/>
            <person name="Zheng L."/>
            <person name="Zheng X.H."/>
            <person name="Zhong F.N."/>
            <person name="Zhong W."/>
            <person name="Zhou X."/>
            <person name="Zhu S.C."/>
            <person name="Zhu X."/>
            <person name="Smith H.O."/>
            <person name="Gibbs R.A."/>
            <person name="Myers E.W."/>
            <person name="Rubin G.M."/>
            <person name="Venter J.C."/>
        </authorList>
    </citation>
    <scope>NUCLEOTIDE SEQUENCE [LARGE SCALE GENOMIC DNA]</scope>
    <source>
        <strain>Berkeley</strain>
    </source>
</reference>
<reference key="2">
    <citation type="journal article" date="2002" name="Genome Biol.">
        <title>Annotation of the Drosophila melanogaster euchromatic genome: a systematic review.</title>
        <authorList>
            <person name="Misra S."/>
            <person name="Crosby M.A."/>
            <person name="Mungall C.J."/>
            <person name="Matthews B.B."/>
            <person name="Campbell K.S."/>
            <person name="Hradecky P."/>
            <person name="Huang Y."/>
            <person name="Kaminker J.S."/>
            <person name="Millburn G.H."/>
            <person name="Prochnik S.E."/>
            <person name="Smith C.D."/>
            <person name="Tupy J.L."/>
            <person name="Whitfield E.J."/>
            <person name="Bayraktaroglu L."/>
            <person name="Berman B.P."/>
            <person name="Bettencourt B.R."/>
            <person name="Celniker S.E."/>
            <person name="de Grey A.D.N.J."/>
            <person name="Drysdale R.A."/>
            <person name="Harris N.L."/>
            <person name="Richter J."/>
            <person name="Russo S."/>
            <person name="Schroeder A.J."/>
            <person name="Shu S.Q."/>
            <person name="Stapleton M."/>
            <person name="Yamada C."/>
            <person name="Ashburner M."/>
            <person name="Gelbart W.M."/>
            <person name="Rubin G.M."/>
            <person name="Lewis S.E."/>
        </authorList>
    </citation>
    <scope>GENOME REANNOTATION</scope>
    <scope>ALTERNATIVE SPLICING</scope>
    <source>
        <strain>Berkeley</strain>
    </source>
</reference>
<reference key="3">
    <citation type="journal article" date="2002" name="Genome Biol.">
        <title>A Drosophila full-length cDNA resource.</title>
        <authorList>
            <person name="Stapleton M."/>
            <person name="Carlson J.W."/>
            <person name="Brokstein P."/>
            <person name="Yu C."/>
            <person name="Champe M."/>
            <person name="George R.A."/>
            <person name="Guarin H."/>
            <person name="Kronmiller B."/>
            <person name="Pacleb J.M."/>
            <person name="Park S."/>
            <person name="Wan K.H."/>
            <person name="Rubin G.M."/>
            <person name="Celniker S.E."/>
        </authorList>
    </citation>
    <scope>NUCLEOTIDE SEQUENCE [LARGE SCALE MRNA] (ISOFORM B)</scope>
    <source>
        <strain>Berkeley</strain>
        <tissue>Head</tissue>
    </source>
</reference>
<reference key="4">
    <citation type="submission" date="2011-08" db="EMBL/GenBank/DDBJ databases">
        <authorList>
            <person name="Carlson J."/>
            <person name="Booth B."/>
            <person name="Frise E."/>
            <person name="Park S."/>
            <person name="Wan K."/>
            <person name="Yu C."/>
            <person name="Celniker S."/>
        </authorList>
    </citation>
    <scope>SEQUENCE REVISION</scope>
    <source>
        <strain>Berkeley</strain>
    </source>
</reference>
<gene>
    <name type="ORF">CG8475</name>
</gene>
<dbReference type="EMBL" id="AE014134">
    <property type="protein sequence ID" value="AAF52613.2"/>
    <property type="molecule type" value="Genomic_DNA"/>
</dbReference>
<dbReference type="EMBL" id="AE014134">
    <property type="protein sequence ID" value="AAN11154.1"/>
    <property type="molecule type" value="Genomic_DNA"/>
</dbReference>
<dbReference type="EMBL" id="AY089501">
    <property type="protein sequence ID" value="AEM24976.1"/>
    <property type="molecule type" value="mRNA"/>
</dbReference>
<dbReference type="RefSeq" id="NP_609189.2">
    <molecule id="Q9VLS1-1"/>
    <property type="nucleotide sequence ID" value="NM_135345.3"/>
</dbReference>
<dbReference type="RefSeq" id="NP_723356.1">
    <molecule id="Q9VLS1-2"/>
    <property type="nucleotide sequence ID" value="NM_164797.3"/>
</dbReference>
<dbReference type="SMR" id="Q9VLS1"/>
<dbReference type="BioGRID" id="60243">
    <property type="interactions" value="12"/>
</dbReference>
<dbReference type="FunCoup" id="Q9VLS1">
    <property type="interactions" value="210"/>
</dbReference>
<dbReference type="IntAct" id="Q9VLS1">
    <property type="interactions" value="10"/>
</dbReference>
<dbReference type="STRING" id="7227.FBpp0307178"/>
<dbReference type="PaxDb" id="7227-FBpp0079254"/>
<dbReference type="EnsemblMetazoa" id="FBtr0079638">
    <molecule id="Q9VLS1-1"/>
    <property type="protein sequence ID" value="FBpp0079254"/>
    <property type="gene ID" value="FBgn0031995"/>
</dbReference>
<dbReference type="EnsemblMetazoa" id="FBtr0079639">
    <molecule id="Q9VLS1-2"/>
    <property type="protein sequence ID" value="FBpp0079255"/>
    <property type="gene ID" value="FBgn0031995"/>
</dbReference>
<dbReference type="GeneID" id="34114"/>
<dbReference type="KEGG" id="dme:Dmel_CG8475"/>
<dbReference type="UCSC" id="CG8475-RA">
    <molecule id="Q9VLS1-1"/>
    <property type="organism name" value="d. melanogaster"/>
</dbReference>
<dbReference type="AGR" id="FB:FBgn0031995"/>
<dbReference type="FlyBase" id="FBgn0031995">
    <property type="gene designation" value="CG8475"/>
</dbReference>
<dbReference type="VEuPathDB" id="VectorBase:FBgn0031995"/>
<dbReference type="eggNOG" id="KOG3635">
    <property type="taxonomic scope" value="Eukaryota"/>
</dbReference>
<dbReference type="GeneTree" id="ENSGT00950000183118"/>
<dbReference type="HOGENOM" id="CLU_004177_0_1_1"/>
<dbReference type="InParanoid" id="Q9VLS1"/>
<dbReference type="OrthoDB" id="5971574at2759"/>
<dbReference type="PhylomeDB" id="Q9VLS1"/>
<dbReference type="Reactome" id="R-DME-70221">
    <property type="pathway name" value="Glycogen breakdown (glycogenolysis)"/>
</dbReference>
<dbReference type="UniPathway" id="UPA00163"/>
<dbReference type="BioGRID-ORCS" id="34114">
    <property type="hits" value="0 hits in 1 CRISPR screen"/>
</dbReference>
<dbReference type="GenomeRNAi" id="34114"/>
<dbReference type="PRO" id="PR:Q9VLS1"/>
<dbReference type="Proteomes" id="UP000000803">
    <property type="component" value="Chromosome 2L"/>
</dbReference>
<dbReference type="Bgee" id="FBgn0031995">
    <property type="expression patterns" value="Expressed in indirect flight muscle cell (Drosophila) in body wall and 187 other cell types or tissues"/>
</dbReference>
<dbReference type="ExpressionAtlas" id="Q9VLS1">
    <property type="expression patterns" value="baseline and differential"/>
</dbReference>
<dbReference type="GO" id="GO:0005886">
    <property type="term" value="C:plasma membrane"/>
    <property type="evidence" value="ECO:0007669"/>
    <property type="project" value="UniProtKB-SubCell"/>
</dbReference>
<dbReference type="GO" id="GO:0005516">
    <property type="term" value="F:calmodulin binding"/>
    <property type="evidence" value="ECO:0007669"/>
    <property type="project" value="UniProtKB-KW"/>
</dbReference>
<dbReference type="GO" id="GO:0005977">
    <property type="term" value="P:glycogen metabolic process"/>
    <property type="evidence" value="ECO:0007669"/>
    <property type="project" value="UniProtKB-UniPathway"/>
</dbReference>
<dbReference type="GO" id="GO:0045819">
    <property type="term" value="P:positive regulation of glycogen catabolic process"/>
    <property type="evidence" value="ECO:0000250"/>
    <property type="project" value="FlyBase"/>
</dbReference>
<dbReference type="Gene3D" id="1.50.10.10">
    <property type="match status" value="1"/>
</dbReference>
<dbReference type="InterPro" id="IPR008928">
    <property type="entry name" value="6-hairpin_glycosidase_sf"/>
</dbReference>
<dbReference type="InterPro" id="IPR012341">
    <property type="entry name" value="6hp_glycosidase-like_sf"/>
</dbReference>
<dbReference type="InterPro" id="IPR011613">
    <property type="entry name" value="GH15-like"/>
</dbReference>
<dbReference type="InterPro" id="IPR045583">
    <property type="entry name" value="KPBA/B_C"/>
</dbReference>
<dbReference type="InterPro" id="IPR008734">
    <property type="entry name" value="PHK_A/B_su"/>
</dbReference>
<dbReference type="PANTHER" id="PTHR10749">
    <property type="entry name" value="PHOSPHORYLASE B KINASE REGULATORY SUBUNIT"/>
    <property type="match status" value="1"/>
</dbReference>
<dbReference type="PANTHER" id="PTHR10749:SF8">
    <property type="entry name" value="PHOSPHORYLASE B KINASE REGULATORY SUBUNIT BETA"/>
    <property type="match status" value="1"/>
</dbReference>
<dbReference type="Pfam" id="PF00723">
    <property type="entry name" value="Glyco_hydro_15"/>
    <property type="match status" value="1"/>
</dbReference>
<dbReference type="Pfam" id="PF19292">
    <property type="entry name" value="KPBB_C"/>
    <property type="match status" value="1"/>
</dbReference>
<dbReference type="SUPFAM" id="SSF48208">
    <property type="entry name" value="Six-hairpin glycosidases"/>
    <property type="match status" value="1"/>
</dbReference>
<feature type="chain" id="PRO_0000057739" description="Probable phosphorylase b kinase regulatory subunit beta">
    <location>
        <begin position="1"/>
        <end position="1093"/>
    </location>
</feature>
<feature type="region of interest" description="Disordered" evidence="4">
    <location>
        <begin position="1"/>
        <end position="27"/>
    </location>
</feature>
<feature type="region of interest" description="Calmodulin-binding" evidence="3">
    <location>
        <begin position="6"/>
        <end position="27"/>
    </location>
</feature>
<feature type="region of interest" description="Calmodulin-binding" evidence="3">
    <location>
        <begin position="751"/>
        <end position="778"/>
    </location>
</feature>
<feature type="region of interest" description="Calmodulin-binding" evidence="3">
    <location>
        <begin position="905"/>
        <end position="936"/>
    </location>
</feature>
<feature type="lipid moiety-binding region" description="S-farnesyl cysteine" evidence="2">
    <location>
        <position position="1090"/>
    </location>
</feature>
<feature type="splice variant" id="VSP_007911" description="In isoform B." evidence="5">
    <original>GTATDLVVQIVLIAESMRLQAMMATYGIQTQT</original>
    <variation>VSWNRDSWRALSAMKCFLKLLTNGKAFWITIG</variation>
    <location>
        <begin position="475"/>
        <end position="506"/>
    </location>
</feature>
<feature type="splice variant" id="VSP_007912" description="In isoform B." evidence="5">
    <location>
        <begin position="507"/>
        <end position="1093"/>
    </location>
</feature>
<sequence length="1093" mass="124864">MRDVPKSLGLSVTTPGGSSGAPDSGRHNSLEEINLDQFLKTSNYEDTVKQLDIYYGIVKRQLLRYQSPITGLFPVMSTDQVVGSVRDSVYCASAVWSLYQAYRRIDDDRGKSYELGQSTVKCMRGILECWVKQASRVELFKQRQSNQHALHSKFQLHTGEKIYPDEFYNHLQIDCVSLYLLFLVQMITSGLQIIYTHDEVAFVQNLVYYVERAYRTPDFGMWERGSKYNNGTPEIHASSIGMAKSALEAINGCNLFGEKGASWSVVYVDIDAHNRNRSIFETMLPRESSSKGVDASLLLTLSFPAFASHEDRLVEQTKQNVVNRLRCKMGFKRFTRDGFLSKNEDKSRRYYHSGELKEFEGLECEWPLFFIAMIIDGVFKNNNEQIEEFQNDLRRCLRTDVNGDPVVTMYYAPDGDGSYMRAPSQSLFLWGQSFFIIAQLLTAGLLHINELDPIRRYLPSYNRPRRAGRYSAFQGTATDLVVQIVLIAESMRLQAMMATYGIQTQTPHEVEPVQIWSSTELIKVYQHLGVNNKVGLSGRPCRPVGSLGTSKVYRICGMTVLCYPLIFEVSDFYLYRDMALLIDDIKTELQFVGKYWRLSGRPTVCLLIREEHMRDPQFKEMLDLLAMLKKGYCDGMKVRIGRLQNLISSSCIEHLDFMNQSDLTDNENAFSQINHEYIGYQSLTDVPKALTYVEEKISVAHFDTKPTPDIINALRSTDSIYCLCQLWGIILNREGPHFEVNGLNVNTALTQLYHRAGSLRYWRAVRYCSSLLHHIVDSISPFITTVLVNGKELTVGIIGQKETVFDKPMTPAEIQNVMYTSVQPYDVIQAVLQQEVVLYCGRLIATNPSMFRGILKIRIGWVLEAMRIYLQISGQQSIDVDNLSPFQVRILLQKVLTVSEWAVEEKLTTLQRRQLEGCLCRVPKHFYNKIWEILQRTPQGILTQGHHLPATPTLTNMSRGELTFNLLVEETLICIDRPERRQITVELLCIVATILNRNPELHFKQALDLDGILAEAFAMYCKDNNIQHQPKPEHEQTKNEDLKAFYSLPYSETTGYLARAAVNKVLQGGIFSTNEEDVQLDGDRLHDDNCKVS</sequence>